<comment type="similarity">
    <text evidence="1">Belongs to the universal ribosomal protein uS9 family.</text>
</comment>
<proteinExistence type="inferred from homology"/>
<protein>
    <recommendedName>
        <fullName evidence="1">Small ribosomal subunit protein uS9</fullName>
    </recommendedName>
    <alternativeName>
        <fullName evidence="3">30S ribosomal protein S9</fullName>
    </alternativeName>
</protein>
<accession>B7GNE7</accession>
<accession>E8MN90</accession>
<keyword id="KW-0687">Ribonucleoprotein</keyword>
<keyword id="KW-0689">Ribosomal protein</keyword>
<sequence length="163" mass="17607">MAENTNDSQVVETEEELTNYTTETNAGAGTGTSAIEPGYGTGRRKEAVARVRLVPGDGKWTINGRTLEEYFPSKLLQREVNSPIVLLKLEGKFDAIVLVDGGGTTGQAGAIRLGVARALNAIDRDANRAALKKAGFLTRDARVVERKKAGLHKARRAPQFSKR</sequence>
<feature type="chain" id="PRO_1000146435" description="Small ribosomal subunit protein uS9">
    <location>
        <begin position="1"/>
        <end position="163"/>
    </location>
</feature>
<feature type="region of interest" description="Disordered" evidence="2">
    <location>
        <begin position="1"/>
        <end position="40"/>
    </location>
</feature>
<feature type="compositionally biased region" description="Polar residues" evidence="2">
    <location>
        <begin position="1"/>
        <end position="11"/>
    </location>
</feature>
<feature type="compositionally biased region" description="Low complexity" evidence="2">
    <location>
        <begin position="18"/>
        <end position="27"/>
    </location>
</feature>
<dbReference type="EMBL" id="CP001095">
    <property type="protein sequence ID" value="ACJ53303.1"/>
    <property type="molecule type" value="Genomic_DNA"/>
</dbReference>
<dbReference type="EMBL" id="AP010889">
    <property type="protein sequence ID" value="BAJ69893.1"/>
    <property type="molecule type" value="Genomic_DNA"/>
</dbReference>
<dbReference type="RefSeq" id="WP_003829868.1">
    <property type="nucleotide sequence ID" value="NZ_JDTT01000030.1"/>
</dbReference>
<dbReference type="SMR" id="B7GNE7"/>
<dbReference type="GeneID" id="69578903"/>
<dbReference type="KEGG" id="bln:Blon_2244"/>
<dbReference type="KEGG" id="blon:BLIJ_2316"/>
<dbReference type="PATRIC" id="fig|391904.8.peg.2318"/>
<dbReference type="HOGENOM" id="CLU_046483_2_0_11"/>
<dbReference type="Proteomes" id="UP000001360">
    <property type="component" value="Chromosome"/>
</dbReference>
<dbReference type="GO" id="GO:0005737">
    <property type="term" value="C:cytoplasm"/>
    <property type="evidence" value="ECO:0007669"/>
    <property type="project" value="UniProtKB-ARBA"/>
</dbReference>
<dbReference type="GO" id="GO:0015935">
    <property type="term" value="C:small ribosomal subunit"/>
    <property type="evidence" value="ECO:0007669"/>
    <property type="project" value="TreeGrafter"/>
</dbReference>
<dbReference type="GO" id="GO:0003723">
    <property type="term" value="F:RNA binding"/>
    <property type="evidence" value="ECO:0007669"/>
    <property type="project" value="TreeGrafter"/>
</dbReference>
<dbReference type="GO" id="GO:0003735">
    <property type="term" value="F:structural constituent of ribosome"/>
    <property type="evidence" value="ECO:0007669"/>
    <property type="project" value="InterPro"/>
</dbReference>
<dbReference type="GO" id="GO:0006412">
    <property type="term" value="P:translation"/>
    <property type="evidence" value="ECO:0007669"/>
    <property type="project" value="UniProtKB-UniRule"/>
</dbReference>
<dbReference type="FunFam" id="3.30.230.10:FF:000001">
    <property type="entry name" value="30S ribosomal protein S9"/>
    <property type="match status" value="1"/>
</dbReference>
<dbReference type="Gene3D" id="3.30.230.10">
    <property type="match status" value="1"/>
</dbReference>
<dbReference type="HAMAP" id="MF_00532_B">
    <property type="entry name" value="Ribosomal_uS9_B"/>
    <property type="match status" value="1"/>
</dbReference>
<dbReference type="InterPro" id="IPR020568">
    <property type="entry name" value="Ribosomal_Su5_D2-typ_SF"/>
</dbReference>
<dbReference type="InterPro" id="IPR000754">
    <property type="entry name" value="Ribosomal_uS9"/>
</dbReference>
<dbReference type="InterPro" id="IPR023035">
    <property type="entry name" value="Ribosomal_uS9_bac/plastid"/>
</dbReference>
<dbReference type="InterPro" id="IPR020574">
    <property type="entry name" value="Ribosomal_uS9_CS"/>
</dbReference>
<dbReference type="InterPro" id="IPR014721">
    <property type="entry name" value="Ribsml_uS5_D2-typ_fold_subgr"/>
</dbReference>
<dbReference type="NCBIfam" id="NF001099">
    <property type="entry name" value="PRK00132.1"/>
    <property type="match status" value="1"/>
</dbReference>
<dbReference type="PANTHER" id="PTHR21569">
    <property type="entry name" value="RIBOSOMAL PROTEIN S9"/>
    <property type="match status" value="1"/>
</dbReference>
<dbReference type="PANTHER" id="PTHR21569:SF1">
    <property type="entry name" value="SMALL RIBOSOMAL SUBUNIT PROTEIN US9M"/>
    <property type="match status" value="1"/>
</dbReference>
<dbReference type="Pfam" id="PF00380">
    <property type="entry name" value="Ribosomal_S9"/>
    <property type="match status" value="1"/>
</dbReference>
<dbReference type="SUPFAM" id="SSF54211">
    <property type="entry name" value="Ribosomal protein S5 domain 2-like"/>
    <property type="match status" value="1"/>
</dbReference>
<dbReference type="PROSITE" id="PS00360">
    <property type="entry name" value="RIBOSOMAL_S9"/>
    <property type="match status" value="1"/>
</dbReference>
<reference key="1">
    <citation type="journal article" date="2008" name="Proc. Natl. Acad. Sci. U.S.A.">
        <title>The genome sequence of Bifidobacterium longum subsp. infantis reveals adaptations for milk utilization within the infant microbiome.</title>
        <authorList>
            <person name="Sela D.A."/>
            <person name="Chapman J."/>
            <person name="Adeuya A."/>
            <person name="Kim J.H."/>
            <person name="Chen F."/>
            <person name="Whitehead T.R."/>
            <person name="Lapidus A."/>
            <person name="Rokhsar D.S."/>
            <person name="Lebrilla C.B."/>
            <person name="German J.B."/>
            <person name="Price N.P."/>
            <person name="Richardson P.M."/>
            <person name="Mills D.A."/>
        </authorList>
    </citation>
    <scope>NUCLEOTIDE SEQUENCE [LARGE SCALE GENOMIC DNA]</scope>
    <source>
        <strain>ATCC 15697 / DSM 20088 / JCM 1222 / NCTC 11817 / S12</strain>
    </source>
</reference>
<reference key="2">
    <citation type="journal article" date="2011" name="Nature">
        <title>Bifidobacteria can protect from enteropathogenic infection through production of acetate.</title>
        <authorList>
            <person name="Fukuda S."/>
            <person name="Toh H."/>
            <person name="Hase K."/>
            <person name="Oshima K."/>
            <person name="Nakanishi Y."/>
            <person name="Yoshimura K."/>
            <person name="Tobe T."/>
            <person name="Clarke J.M."/>
            <person name="Topping D.L."/>
            <person name="Suzuki T."/>
            <person name="Taylor T.D."/>
            <person name="Itoh K."/>
            <person name="Kikuchi J."/>
            <person name="Morita H."/>
            <person name="Hattori M."/>
            <person name="Ohno H."/>
        </authorList>
    </citation>
    <scope>NUCLEOTIDE SEQUENCE [LARGE SCALE GENOMIC DNA]</scope>
    <source>
        <strain>ATCC 15697 / DSM 20088 / JCM 1222 / NCTC 11817 / S12</strain>
    </source>
</reference>
<gene>
    <name evidence="1" type="primary">rpsI</name>
    <name type="ordered locus">Blon_2244</name>
    <name type="ordered locus">BLIJ_2316</name>
</gene>
<organism>
    <name type="scientific">Bifidobacterium longum subsp. infantis (strain ATCC 15697 / DSM 20088 / JCM 1222 / NCTC 11817 / S12)</name>
    <dbReference type="NCBI Taxonomy" id="391904"/>
    <lineage>
        <taxon>Bacteria</taxon>
        <taxon>Bacillati</taxon>
        <taxon>Actinomycetota</taxon>
        <taxon>Actinomycetes</taxon>
        <taxon>Bifidobacteriales</taxon>
        <taxon>Bifidobacteriaceae</taxon>
        <taxon>Bifidobacterium</taxon>
    </lineage>
</organism>
<name>RS9_BIFLS</name>
<evidence type="ECO:0000255" key="1">
    <source>
        <dbReference type="HAMAP-Rule" id="MF_00532"/>
    </source>
</evidence>
<evidence type="ECO:0000256" key="2">
    <source>
        <dbReference type="SAM" id="MobiDB-lite"/>
    </source>
</evidence>
<evidence type="ECO:0000305" key="3"/>